<evidence type="ECO:0000250" key="1">
    <source>
        <dbReference type="UniProtKB" id="P84516"/>
    </source>
</evidence>
<evidence type="ECO:0000250" key="2">
    <source>
        <dbReference type="UniProtKB" id="Q39034"/>
    </source>
</evidence>
<evidence type="ECO:0000255" key="3"/>
<evidence type="ECO:0000255" key="4">
    <source>
        <dbReference type="PROSITE-ProRule" id="PRU00297"/>
    </source>
</evidence>
<evidence type="ECO:0000255" key="5">
    <source>
        <dbReference type="PROSITE-ProRule" id="PRU10012"/>
    </source>
</evidence>
<evidence type="ECO:0000269" key="6">
    <source>
    </source>
</evidence>
<evidence type="ECO:0000269" key="7">
    <source>
    </source>
</evidence>
<evidence type="ECO:0000305" key="8"/>
<evidence type="ECO:0000312" key="9">
    <source>
        <dbReference type="EMBL" id="BAA82307.1"/>
    </source>
</evidence>
<evidence type="ECO:0000312" key="10">
    <source>
        <dbReference type="EMBL" id="BAD97808.1"/>
    </source>
</evidence>
<evidence type="ECO:0000312" key="11">
    <source>
        <dbReference type="EMBL" id="CAH17984.1"/>
    </source>
</evidence>
<gene>
    <name evidence="11" type="primary">poxN1</name>
</gene>
<comment type="function">
    <text evidence="4 6 8">Removal of H(2)O(2), oxidation of toxic reductants, biosynthesis and degradation of lignin, suberization, auxin catabolism, response to environmental stresses such as wounding, pathogen attack and oxidative stress. These functions might be dependent on each isozyme/isoform in each plant tissue. Can use NADH, NADPH and monolignols as substrates.</text>
</comment>
<comment type="catalytic activity">
    <reaction evidence="6">
        <text>2 a phenolic donor + H2O2 = 2 a phenolic radical donor + 2 H2O</text>
        <dbReference type="Rhea" id="RHEA:56136"/>
        <dbReference type="ChEBI" id="CHEBI:15377"/>
        <dbReference type="ChEBI" id="CHEBI:16240"/>
        <dbReference type="ChEBI" id="CHEBI:139520"/>
        <dbReference type="ChEBI" id="CHEBI:139521"/>
        <dbReference type="EC" id="1.11.1.7"/>
    </reaction>
</comment>
<comment type="cofactor">
    <cofactor evidence="2 4">
        <name>Ca(2+)</name>
        <dbReference type="ChEBI" id="CHEBI:29108"/>
    </cofactor>
    <text evidence="2 4">Binds 2 calcium ions per subunit.</text>
</comment>
<comment type="cofactor">
    <cofactor evidence="2 4">
        <name>heme b</name>
        <dbReference type="ChEBI" id="CHEBI:60344"/>
    </cofactor>
    <text evidence="2 4">Binds 1 heme b (iron(II)-protoporphyrin IX) group per subunit.</text>
</comment>
<comment type="biophysicochemical properties">
    <phDependence>
        <text evidence="6">Optimum pH is 4.7.</text>
    </phDependence>
</comment>
<comment type="subcellular location">
    <subcellularLocation>
        <location evidence="1 4">Secreted</location>
    </subcellularLocation>
</comment>
<comment type="tissue specificity">
    <text evidence="7">Expressed at a high level in roots and at a trace level in lower leaves. Not expressed in upper leaves, stems, flowers, seeds and shoot apices.</text>
</comment>
<comment type="induction">
    <text evidence="7">Induced rapidly in leaves after wounding, mRNA is detectable 30 minutes after wounding, reaches maximum levels after 4 hours, and decreases slightly after 8 hours. When lower leaves are wounded, mRNA also accumulates in upper, unwounded, leaves. Wound-induced expression is enhanced by spermine, and suppressed by methyl jasmonite and coronatine. Salicylic acid and ethephon have no effect on wound-induced expression. Induced by infection with TMV.</text>
</comment>
<comment type="similarity">
    <text evidence="4">Belongs to the peroxidase family. Classical plant (class III) peroxidase subfamily.</text>
</comment>
<feature type="signal peptide" evidence="6">
    <location>
        <begin position="1"/>
        <end position="29"/>
    </location>
</feature>
<feature type="chain" id="PRO_0000312842" description="Peroxidase N1" evidence="6">
    <location>
        <begin position="30"/>
        <end position="330"/>
    </location>
</feature>
<feature type="active site" description="Proton acceptor" evidence="2 4 5">
    <location>
        <position position="72"/>
    </location>
</feature>
<feature type="binding site" evidence="2 4">
    <location>
        <position position="73"/>
    </location>
    <ligand>
        <name>Ca(2+)</name>
        <dbReference type="ChEBI" id="CHEBI:29108"/>
        <label>1</label>
    </ligand>
</feature>
<feature type="binding site" evidence="4">
    <location>
        <position position="76"/>
    </location>
    <ligand>
        <name>Ca(2+)</name>
        <dbReference type="ChEBI" id="CHEBI:29108"/>
        <label>1</label>
    </ligand>
</feature>
<feature type="binding site" evidence="4">
    <location>
        <position position="78"/>
    </location>
    <ligand>
        <name>Ca(2+)</name>
        <dbReference type="ChEBI" id="CHEBI:29108"/>
        <label>1</label>
    </ligand>
</feature>
<feature type="binding site" evidence="2 4">
    <location>
        <position position="80"/>
    </location>
    <ligand>
        <name>Ca(2+)</name>
        <dbReference type="ChEBI" id="CHEBI:29108"/>
        <label>1</label>
    </ligand>
</feature>
<feature type="binding site" evidence="2 4">
    <location>
        <position position="82"/>
    </location>
    <ligand>
        <name>Ca(2+)</name>
        <dbReference type="ChEBI" id="CHEBI:29108"/>
        <label>1</label>
    </ligand>
</feature>
<feature type="binding site" evidence="2 4">
    <location>
        <position position="164"/>
    </location>
    <ligand>
        <name>substrate</name>
    </ligand>
</feature>
<feature type="binding site" description="axial binding residue" evidence="2 4">
    <location>
        <position position="194"/>
    </location>
    <ligand>
        <name>heme b</name>
        <dbReference type="ChEBI" id="CHEBI:60344"/>
    </ligand>
    <ligandPart>
        <name>Fe</name>
        <dbReference type="ChEBI" id="CHEBI:18248"/>
    </ligandPart>
</feature>
<feature type="binding site" evidence="2 4">
    <location>
        <position position="195"/>
    </location>
    <ligand>
        <name>Ca(2+)</name>
        <dbReference type="ChEBI" id="CHEBI:29108"/>
        <label>2</label>
    </ligand>
</feature>
<feature type="binding site" evidence="2 4">
    <location>
        <position position="246"/>
    </location>
    <ligand>
        <name>Ca(2+)</name>
        <dbReference type="ChEBI" id="CHEBI:29108"/>
        <label>2</label>
    </ligand>
</feature>
<feature type="binding site" evidence="2 4">
    <location>
        <position position="254"/>
    </location>
    <ligand>
        <name>Ca(2+)</name>
        <dbReference type="ChEBI" id="CHEBI:29108"/>
        <label>2</label>
    </ligand>
</feature>
<feature type="site" description="Transition state stabilizer" evidence="2 4">
    <location>
        <position position="68"/>
    </location>
</feature>
<feature type="modified residue" description="Pyrrolidone carboxylic acid" evidence="4">
    <location>
        <position position="30"/>
    </location>
</feature>
<feature type="glycosylation site" description="N-linked (GlcNAc...) asparagine" evidence="3">
    <location>
        <position position="212"/>
    </location>
</feature>
<feature type="disulfide bond" evidence="2 4">
    <location>
        <begin position="41"/>
        <end position="117"/>
    </location>
</feature>
<feature type="disulfide bond" evidence="2 4">
    <location>
        <begin position="74"/>
        <end position="79"/>
    </location>
</feature>
<feature type="disulfide bond" evidence="2 4">
    <location>
        <begin position="123"/>
        <end position="326"/>
    </location>
</feature>
<feature type="disulfide bond" evidence="2 4">
    <location>
        <begin position="201"/>
        <end position="233"/>
    </location>
</feature>
<feature type="sequence variant" evidence="6">
    <original>L</original>
    <variation>Q</variation>
    <location>
        <position position="77"/>
    </location>
</feature>
<feature type="sequence variant" evidence="6">
    <original>K</original>
    <variation>R</variation>
    <location>
        <position position="101"/>
    </location>
</feature>
<feature type="sequence variant" evidence="6">
    <original>T</original>
    <variation>K</variation>
    <location>
        <position position="111"/>
    </location>
</feature>
<feature type="sequence variant" evidence="6">
    <original>Q</original>
    <variation>K</variation>
    <location>
        <position position="281"/>
    </location>
</feature>
<feature type="sequence conflict" description="In Ref. 4; AA sequence." evidence="8" ref="4">
    <original>EGS</original>
    <variation>DGT</variation>
    <location>
        <begin position="86"/>
        <end position="88"/>
    </location>
</feature>
<feature type="sequence conflict" description="In Ref. 4; AA sequence." evidence="8" ref="4">
    <original>R</original>
    <variation>S</variation>
    <location>
        <position position="98"/>
    </location>
</feature>
<feature type="sequence conflict" description="In Ref. 4; AA sequence." evidence="8" ref="4">
    <original>L</original>
    <variation>V</variation>
    <location>
        <position position="129"/>
    </location>
</feature>
<feature type="sequence conflict" description="In Ref. 2; BAD97807." evidence="8" ref="2">
    <original>D</original>
    <variation>N</variation>
    <location>
        <position position="162"/>
    </location>
</feature>
<feature type="sequence conflict" description="In Ref. 2; BAD97807." evidence="8" ref="2">
    <original>I</original>
    <variation>V</variation>
    <location>
        <position position="172"/>
    </location>
</feature>
<feature type="sequence conflict" description="In Ref. 2; BAD97807." evidence="8" ref="2">
    <original>R</original>
    <variation>Q</variation>
    <location>
        <position position="175"/>
    </location>
</feature>
<feature type="sequence conflict" description="In Ref. 2; BAD97807." evidence="8" ref="2">
    <original>LT</original>
    <variation>TA</variation>
    <location>
        <begin position="178"/>
        <end position="179"/>
    </location>
</feature>
<feature type="sequence conflict" description="In Ref. 2; BAD97807." evidence="8" ref="2">
    <original>D</original>
    <variation>G</variation>
    <location>
        <position position="206"/>
    </location>
</feature>
<feature type="sequence conflict" description="In Ref. 2; BAD97807." evidence="8" ref="2">
    <original>R</original>
    <variation>Q</variation>
    <location>
        <position position="230"/>
    </location>
</feature>
<feature type="sequence conflict" description="In Ref. 2; BAD97807." evidence="8" ref="2">
    <original>S</original>
    <variation>A</variation>
    <location>
        <position position="240"/>
    </location>
</feature>
<feature type="sequence conflict" description="In Ref. 2; BAD97807." evidence="8" ref="2">
    <original>G</original>
    <variation>A</variation>
    <location>
        <position position="244"/>
    </location>
</feature>
<feature type="sequence conflict" description="In Ref. 2; BAD97807." evidence="8" ref="2">
    <original>V</original>
    <variation>A</variation>
    <location>
        <position position="250"/>
    </location>
</feature>
<feature type="sequence conflict" description="In Ref. 3; CAH17984." evidence="8" ref="3">
    <original>R</original>
    <variation>G</variation>
    <location>
        <position position="304"/>
    </location>
</feature>
<proteinExistence type="evidence at protein level"/>
<name>PERN1_TOBAC</name>
<organism>
    <name type="scientific">Nicotiana tabacum</name>
    <name type="common">Common tobacco</name>
    <dbReference type="NCBI Taxonomy" id="4097"/>
    <lineage>
        <taxon>Eukaryota</taxon>
        <taxon>Viridiplantae</taxon>
        <taxon>Streptophyta</taxon>
        <taxon>Embryophyta</taxon>
        <taxon>Tracheophyta</taxon>
        <taxon>Spermatophyta</taxon>
        <taxon>Magnoliopsida</taxon>
        <taxon>eudicotyledons</taxon>
        <taxon>Gunneridae</taxon>
        <taxon>Pentapetalae</taxon>
        <taxon>asterids</taxon>
        <taxon>lamiids</taxon>
        <taxon>Solanales</taxon>
        <taxon>Solanaceae</taxon>
        <taxon>Nicotianoideae</taxon>
        <taxon>Nicotianeae</taxon>
        <taxon>Nicotiana</taxon>
    </lineage>
</organism>
<protein>
    <recommendedName>
        <fullName>Peroxidase N1</fullName>
        <ecNumber>1.11.1.7</ecNumber>
    </recommendedName>
    <alternativeName>
        <fullName>Peroxidase B2</fullName>
    </alternativeName>
    <alternativeName>
        <fullName>Peroxidase B3</fullName>
    </alternativeName>
</protein>
<accession>Q9XIV8</accession>
<accession>P81512</accession>
<accession>P81513</accession>
<accession>Q4A3Y7</accession>
<accession>Q50LI2</accession>
<sequence>MEYYHHSINKMAMFMVILVLAIDVTMVLGQGTRVGFYSSTCPRAESIVQSTVRAHFQSDPTVAPGILRMHFHDCFVLGCDGSILIEGSDAERTAIPNRNLKGFDVIEDAKTQIEAICPGVVSCADILALAARDSVVATRGLTWSVPTGRRDGRVSRAADAGDLPAFFDSVDIQKRKFLTKGLNTQDLVALTGAHTIGTAGCAVIRDRLFNFNSTGGPDPSIDATFLPQLRALCPQNGDASRRVGLDTGSVNNFDTSYFSNLRNGRGVLESDQKLWTDASTQVFVQRFLGIRGLLGLTFGVEFGRSMVKMSNIEVKTGTNGEIRKVCSAIN</sequence>
<keyword id="KW-0106">Calcium</keyword>
<keyword id="KW-0903">Direct protein sequencing</keyword>
<keyword id="KW-1015">Disulfide bond</keyword>
<keyword id="KW-0325">Glycoprotein</keyword>
<keyword id="KW-0349">Heme</keyword>
<keyword id="KW-0376">Hydrogen peroxide</keyword>
<keyword id="KW-0408">Iron</keyword>
<keyword id="KW-0479">Metal-binding</keyword>
<keyword id="KW-0560">Oxidoreductase</keyword>
<keyword id="KW-0575">Peroxidase</keyword>
<keyword id="KW-0873">Pyrrolidone carboxylic acid</keyword>
<keyword id="KW-1185">Reference proteome</keyword>
<keyword id="KW-0964">Secreted</keyword>
<keyword id="KW-0732">Signal</keyword>
<reference evidence="8 9" key="1">
    <citation type="online journal article" date="1999" name="Plant Gene Register">
        <title>cDNA sequences for two novel tobacco peroxidase isoenzymes (Accession Nos. AB027752 and AB027753). (PGR99-109).</title>
        <authorList>
            <person name="Hiraga S."/>
            <person name="Ito H."/>
            <person name="Matsui H."/>
            <person name="Honma M."/>
            <person name="Ohashi Y."/>
        </authorList>
        <locator>PGR99-109</locator>
    </citation>
    <scope>NUCLEOTIDE SEQUENCE [MRNA]</scope>
    <source>
        <strain>cv. Samsun NN</strain>
        <tissue evidence="9">Leaf</tissue>
    </source>
</reference>
<reference evidence="10" key="2">
    <citation type="submission" date="2000-06" db="EMBL/GenBank/DDBJ databases">
        <title>cDNA sequence encoding a peroxidase highly expressed in paraquat-tolerant tobacco callus.</title>
        <authorList>
            <person name="Kondo S."/>
        </authorList>
    </citation>
    <scope>NUCLEOTIDE SEQUENCE [MRNA]</scope>
    <source>
        <strain>cv. Samsun</strain>
        <tissue evidence="10">Callus</tissue>
    </source>
</reference>
<reference evidence="8 11" key="3">
    <citation type="journal article" date="2005" name="Plant Mol. Biol.">
        <title>Isolation and characterization of a polymorphic stigma-specific class III peroxidase gene from Senecio squalidus L. (Asteraceae).</title>
        <authorList>
            <person name="McInnis S.M."/>
            <person name="Costa L.M."/>
            <person name="Gutierrez-Marcos J.F."/>
            <person name="Henderson C.A."/>
            <person name="Hiscock S.J."/>
        </authorList>
    </citation>
    <scope>NUCLEOTIDE SEQUENCE [GENOMIC DNA] OF 33-327</scope>
    <source>
        <tissue evidence="11">Leaf</tissue>
    </source>
</reference>
<reference evidence="8" key="4">
    <citation type="journal article" date="1999" name="Plant Physiol.">
        <title>Isolation of tobacco isoperoxidases accumulated in cell-suspension culture medium and characterization of activities related to cell wall metabolism.</title>
        <authorList>
            <person name="de Marco A."/>
            <person name="Guzzardi P."/>
            <person name="Jamet E."/>
        </authorList>
    </citation>
    <scope>PROTEIN SEQUENCE OF 44-130 AND 270-330</scope>
    <scope>FUNCTION</scope>
    <scope>CATALYTIC ACTIVITY</scope>
    <scope>BIOPHYSICOCHEMICAL PROPERTIES</scope>
    <scope>VARIANTS GLN-77; ARG-101; LYS-111 AND LYS-281</scope>
    <source>
        <strain evidence="6">cv. Bright Yellow 2</strain>
    </source>
</reference>
<reference evidence="8" key="5">
    <citation type="journal article" date="2000" name="Plant Cell Physiol.">
        <title>Wound-induced expression of a tobacco peroxidase is not enhanced by ethephon and suppressed by methyl jasmonate and coronatine.</title>
        <authorList>
            <person name="Hiraga S."/>
            <person name="Ito H."/>
            <person name="Sasaki K."/>
            <person name="Yamakawa H."/>
            <person name="Mitsuhara I."/>
            <person name="Toshima H."/>
            <person name="Matsui H."/>
            <person name="Honma M."/>
            <person name="Ohashi Y."/>
        </authorList>
    </citation>
    <scope>TISSUE SPECIFICITY</scope>
    <scope>INDUCTION</scope>
</reference>
<dbReference type="EC" id="1.11.1.7"/>
<dbReference type="EMBL" id="AB027753">
    <property type="protein sequence ID" value="BAA82307.1"/>
    <property type="molecule type" value="mRNA"/>
</dbReference>
<dbReference type="EMBL" id="AB044153">
    <property type="protein sequence ID" value="BAD97807.1"/>
    <property type="molecule type" value="mRNA"/>
</dbReference>
<dbReference type="EMBL" id="AB044154">
    <property type="protein sequence ID" value="BAD97808.1"/>
    <property type="molecule type" value="mRNA"/>
</dbReference>
<dbReference type="EMBL" id="AJ810538">
    <property type="protein sequence ID" value="CAH17984.1"/>
    <property type="molecule type" value="Genomic_DNA"/>
</dbReference>
<dbReference type="RefSeq" id="NP_001312082.1">
    <property type="nucleotide sequence ID" value="NM_001325153.1"/>
</dbReference>
<dbReference type="SMR" id="Q9XIV8"/>
<dbReference type="STRING" id="4097.Q9XIV8"/>
<dbReference type="PeroxiBase" id="3815">
    <property type="entry name" value="NtPrx10-1B"/>
</dbReference>
<dbReference type="PeroxiBase" id="52">
    <property type="entry name" value="NtPrx10-1A"/>
</dbReference>
<dbReference type="GlyCosmos" id="Q9XIV8">
    <property type="glycosylation" value="1 site, No reported glycans"/>
</dbReference>
<dbReference type="PaxDb" id="4097-Q9XIV8"/>
<dbReference type="GeneID" id="107773042"/>
<dbReference type="KEGG" id="nta:107773042"/>
<dbReference type="KEGG" id="nta:107803841"/>
<dbReference type="OrthoDB" id="2113341at2759"/>
<dbReference type="Proteomes" id="UP000084051">
    <property type="component" value="Unplaced"/>
</dbReference>
<dbReference type="GO" id="GO:0005576">
    <property type="term" value="C:extracellular region"/>
    <property type="evidence" value="ECO:0007669"/>
    <property type="project" value="UniProtKB-SubCell"/>
</dbReference>
<dbReference type="GO" id="GO:0009505">
    <property type="term" value="C:plant-type cell wall"/>
    <property type="evidence" value="ECO:0000318"/>
    <property type="project" value="GO_Central"/>
</dbReference>
<dbReference type="GO" id="GO:0020037">
    <property type="term" value="F:heme binding"/>
    <property type="evidence" value="ECO:0007669"/>
    <property type="project" value="InterPro"/>
</dbReference>
<dbReference type="GO" id="GO:0140825">
    <property type="term" value="F:lactoperoxidase activity"/>
    <property type="evidence" value="ECO:0007669"/>
    <property type="project" value="UniProtKB-EC"/>
</dbReference>
<dbReference type="GO" id="GO:0046872">
    <property type="term" value="F:metal ion binding"/>
    <property type="evidence" value="ECO:0007669"/>
    <property type="project" value="UniProtKB-KW"/>
</dbReference>
<dbReference type="GO" id="GO:0004601">
    <property type="term" value="F:peroxidase activity"/>
    <property type="evidence" value="ECO:0000318"/>
    <property type="project" value="GO_Central"/>
</dbReference>
<dbReference type="GO" id="GO:0042744">
    <property type="term" value="P:hydrogen peroxide catabolic process"/>
    <property type="evidence" value="ECO:0007669"/>
    <property type="project" value="UniProtKB-KW"/>
</dbReference>
<dbReference type="GO" id="GO:0006979">
    <property type="term" value="P:response to oxidative stress"/>
    <property type="evidence" value="ECO:0007669"/>
    <property type="project" value="InterPro"/>
</dbReference>
<dbReference type="GO" id="GO:0006950">
    <property type="term" value="P:response to stress"/>
    <property type="evidence" value="ECO:0000318"/>
    <property type="project" value="GO_Central"/>
</dbReference>
<dbReference type="CDD" id="cd00693">
    <property type="entry name" value="secretory_peroxidase"/>
    <property type="match status" value="1"/>
</dbReference>
<dbReference type="FunFam" id="1.10.420.10:FF:000010">
    <property type="entry name" value="Peroxidase"/>
    <property type="match status" value="1"/>
</dbReference>
<dbReference type="FunFam" id="1.10.520.10:FF:000001">
    <property type="entry name" value="Peroxidase"/>
    <property type="match status" value="1"/>
</dbReference>
<dbReference type="Gene3D" id="1.10.520.10">
    <property type="match status" value="1"/>
</dbReference>
<dbReference type="Gene3D" id="1.10.420.10">
    <property type="entry name" value="Peroxidase, domain 2"/>
    <property type="match status" value="1"/>
</dbReference>
<dbReference type="InterPro" id="IPR002016">
    <property type="entry name" value="Haem_peroxidase"/>
</dbReference>
<dbReference type="InterPro" id="IPR010255">
    <property type="entry name" value="Haem_peroxidase_sf"/>
</dbReference>
<dbReference type="InterPro" id="IPR000823">
    <property type="entry name" value="Peroxidase_pln"/>
</dbReference>
<dbReference type="InterPro" id="IPR019794">
    <property type="entry name" value="Peroxidases_AS"/>
</dbReference>
<dbReference type="InterPro" id="IPR019793">
    <property type="entry name" value="Peroxidases_heam-ligand_BS"/>
</dbReference>
<dbReference type="InterPro" id="IPR033905">
    <property type="entry name" value="Secretory_peroxidase"/>
</dbReference>
<dbReference type="PANTHER" id="PTHR31235">
    <property type="entry name" value="PEROXIDASE 25-RELATED"/>
    <property type="match status" value="1"/>
</dbReference>
<dbReference type="Pfam" id="PF00141">
    <property type="entry name" value="peroxidase"/>
    <property type="match status" value="1"/>
</dbReference>
<dbReference type="PRINTS" id="PR00458">
    <property type="entry name" value="PEROXIDASE"/>
</dbReference>
<dbReference type="PRINTS" id="PR00461">
    <property type="entry name" value="PLPEROXIDASE"/>
</dbReference>
<dbReference type="SUPFAM" id="SSF48113">
    <property type="entry name" value="Heme-dependent peroxidases"/>
    <property type="match status" value="1"/>
</dbReference>
<dbReference type="PROSITE" id="PS00435">
    <property type="entry name" value="PEROXIDASE_1"/>
    <property type="match status" value="1"/>
</dbReference>
<dbReference type="PROSITE" id="PS00436">
    <property type="entry name" value="PEROXIDASE_2"/>
    <property type="match status" value="1"/>
</dbReference>
<dbReference type="PROSITE" id="PS50873">
    <property type="entry name" value="PEROXIDASE_4"/>
    <property type="match status" value="1"/>
</dbReference>